<keyword id="KW-0067">ATP-binding</keyword>
<keyword id="KW-0963">Cytoplasm</keyword>
<keyword id="KW-0227">DNA damage</keyword>
<keyword id="KW-0234">DNA repair</keyword>
<keyword id="KW-0235">DNA replication</keyword>
<keyword id="KW-0238">DNA-binding</keyword>
<keyword id="KW-0547">Nucleotide-binding</keyword>
<keyword id="KW-1185">Reference proteome</keyword>
<keyword id="KW-0742">SOS response</keyword>
<organism>
    <name type="scientific">Geobacillus kaustophilus (strain HTA426)</name>
    <dbReference type="NCBI Taxonomy" id="235909"/>
    <lineage>
        <taxon>Bacteria</taxon>
        <taxon>Bacillati</taxon>
        <taxon>Bacillota</taxon>
        <taxon>Bacilli</taxon>
        <taxon>Bacillales</taxon>
        <taxon>Anoxybacillaceae</taxon>
        <taxon>Geobacillus</taxon>
        <taxon>Geobacillus thermoleovorans group</taxon>
    </lineage>
</organism>
<gene>
    <name evidence="1" type="primary">recF</name>
    <name type="ordered locus">GK0004</name>
</gene>
<reference key="1">
    <citation type="journal article" date="2004" name="Nucleic Acids Res.">
        <title>Thermoadaptation trait revealed by the genome sequence of thermophilic Geobacillus kaustophilus.</title>
        <authorList>
            <person name="Takami H."/>
            <person name="Takaki Y."/>
            <person name="Chee G.-J."/>
            <person name="Nishi S."/>
            <person name="Shimamura S."/>
            <person name="Suzuki H."/>
            <person name="Matsui S."/>
            <person name="Uchiyama I."/>
        </authorList>
    </citation>
    <scope>NUCLEOTIDE SEQUENCE [LARGE SCALE GENOMIC DNA]</scope>
    <source>
        <strain>HTA426</strain>
    </source>
</reference>
<sequence>MFLTNLTLTNYRNYEYETLNFGEGVNVILGENAQGKTNMMEAIYVLAMAKSHRTSNDKDLIRWNEEYAKIEGRAEKRSGSLTLELLISKKGKKARCNHIEQQRLSQYVGHLNVVMFAPEDLNLVKGSPQVRRRFVDMEIGQVSPVYIHDLSQYQKLLQQRNHYLKMMQARERSDEAVLDVLTEQLVLLAAKITLRRRQFLSLLEQWAMPIHYEISRGAEQLCIRYEPSVDVSEKAELSRIVEAYSETFAAMREREVQRGTTLVGPHRDDIAFFVNGKNVQTFGSQGQQRTTALAVKLAELELIFSELGDYPILLLDDVLSELDDFRQTHLLDAIRKKVQTFVTTTSIDGIKHDIIQEAAIYRVHSGSVTAPS</sequence>
<accession>Q5L3Y9</accession>
<evidence type="ECO:0000255" key="1">
    <source>
        <dbReference type="HAMAP-Rule" id="MF_00365"/>
    </source>
</evidence>
<protein>
    <recommendedName>
        <fullName evidence="1">DNA replication and repair protein RecF</fullName>
    </recommendedName>
</protein>
<dbReference type="EMBL" id="BA000043">
    <property type="protein sequence ID" value="BAD74289.1"/>
    <property type="molecule type" value="Genomic_DNA"/>
</dbReference>
<dbReference type="RefSeq" id="WP_011229520.1">
    <property type="nucleotide sequence ID" value="NC_006510.1"/>
</dbReference>
<dbReference type="SMR" id="Q5L3Y9"/>
<dbReference type="STRING" id="235909.GK0004"/>
<dbReference type="GeneID" id="32065380"/>
<dbReference type="KEGG" id="gka:GK0004"/>
<dbReference type="eggNOG" id="COG1195">
    <property type="taxonomic scope" value="Bacteria"/>
</dbReference>
<dbReference type="HOGENOM" id="CLU_040267_0_1_9"/>
<dbReference type="Proteomes" id="UP000001172">
    <property type="component" value="Chromosome"/>
</dbReference>
<dbReference type="GO" id="GO:0005737">
    <property type="term" value="C:cytoplasm"/>
    <property type="evidence" value="ECO:0007669"/>
    <property type="project" value="UniProtKB-SubCell"/>
</dbReference>
<dbReference type="GO" id="GO:0005524">
    <property type="term" value="F:ATP binding"/>
    <property type="evidence" value="ECO:0007669"/>
    <property type="project" value="UniProtKB-UniRule"/>
</dbReference>
<dbReference type="GO" id="GO:0003697">
    <property type="term" value="F:single-stranded DNA binding"/>
    <property type="evidence" value="ECO:0007669"/>
    <property type="project" value="UniProtKB-UniRule"/>
</dbReference>
<dbReference type="GO" id="GO:0006260">
    <property type="term" value="P:DNA replication"/>
    <property type="evidence" value="ECO:0007669"/>
    <property type="project" value="UniProtKB-UniRule"/>
</dbReference>
<dbReference type="GO" id="GO:0000731">
    <property type="term" value="P:DNA synthesis involved in DNA repair"/>
    <property type="evidence" value="ECO:0007669"/>
    <property type="project" value="TreeGrafter"/>
</dbReference>
<dbReference type="GO" id="GO:0006302">
    <property type="term" value="P:double-strand break repair"/>
    <property type="evidence" value="ECO:0007669"/>
    <property type="project" value="TreeGrafter"/>
</dbReference>
<dbReference type="GO" id="GO:0009432">
    <property type="term" value="P:SOS response"/>
    <property type="evidence" value="ECO:0007669"/>
    <property type="project" value="UniProtKB-UniRule"/>
</dbReference>
<dbReference type="CDD" id="cd03242">
    <property type="entry name" value="ABC_RecF"/>
    <property type="match status" value="1"/>
</dbReference>
<dbReference type="FunFam" id="1.20.1050.90:FF:000002">
    <property type="entry name" value="DNA replication and repair protein RecF"/>
    <property type="match status" value="1"/>
</dbReference>
<dbReference type="Gene3D" id="3.40.50.300">
    <property type="entry name" value="P-loop containing nucleotide triphosphate hydrolases"/>
    <property type="match status" value="1"/>
</dbReference>
<dbReference type="Gene3D" id="1.20.1050.90">
    <property type="entry name" value="RecF/RecN/SMC, N-terminal domain"/>
    <property type="match status" value="1"/>
</dbReference>
<dbReference type="HAMAP" id="MF_00365">
    <property type="entry name" value="RecF"/>
    <property type="match status" value="1"/>
</dbReference>
<dbReference type="InterPro" id="IPR001238">
    <property type="entry name" value="DNA-binding_RecF"/>
</dbReference>
<dbReference type="InterPro" id="IPR018078">
    <property type="entry name" value="DNA-binding_RecF_CS"/>
</dbReference>
<dbReference type="InterPro" id="IPR027417">
    <property type="entry name" value="P-loop_NTPase"/>
</dbReference>
<dbReference type="InterPro" id="IPR003395">
    <property type="entry name" value="RecF/RecN/SMC_N"/>
</dbReference>
<dbReference type="InterPro" id="IPR042174">
    <property type="entry name" value="RecF_2"/>
</dbReference>
<dbReference type="NCBIfam" id="TIGR00611">
    <property type="entry name" value="recf"/>
    <property type="match status" value="1"/>
</dbReference>
<dbReference type="PANTHER" id="PTHR32182">
    <property type="entry name" value="DNA REPLICATION AND REPAIR PROTEIN RECF"/>
    <property type="match status" value="1"/>
</dbReference>
<dbReference type="PANTHER" id="PTHR32182:SF0">
    <property type="entry name" value="DNA REPLICATION AND REPAIR PROTEIN RECF"/>
    <property type="match status" value="1"/>
</dbReference>
<dbReference type="Pfam" id="PF02463">
    <property type="entry name" value="SMC_N"/>
    <property type="match status" value="1"/>
</dbReference>
<dbReference type="SUPFAM" id="SSF52540">
    <property type="entry name" value="P-loop containing nucleoside triphosphate hydrolases"/>
    <property type="match status" value="1"/>
</dbReference>
<dbReference type="PROSITE" id="PS00617">
    <property type="entry name" value="RECF_1"/>
    <property type="match status" value="1"/>
</dbReference>
<dbReference type="PROSITE" id="PS00618">
    <property type="entry name" value="RECF_2"/>
    <property type="match status" value="1"/>
</dbReference>
<feature type="chain" id="PRO_0000236118" description="DNA replication and repair protein RecF">
    <location>
        <begin position="1"/>
        <end position="372"/>
    </location>
</feature>
<feature type="binding site" evidence="1">
    <location>
        <begin position="30"/>
        <end position="37"/>
    </location>
    <ligand>
        <name>ATP</name>
        <dbReference type="ChEBI" id="CHEBI:30616"/>
    </ligand>
</feature>
<comment type="function">
    <text evidence="1">The RecF protein is involved in DNA metabolism; it is required for DNA replication and normal SOS inducibility. RecF binds preferentially to single-stranded, linear DNA. It also seems to bind ATP.</text>
</comment>
<comment type="subcellular location">
    <subcellularLocation>
        <location evidence="1">Cytoplasm</location>
    </subcellularLocation>
</comment>
<comment type="similarity">
    <text evidence="1">Belongs to the RecF family.</text>
</comment>
<name>RECF_GEOKA</name>
<proteinExistence type="inferred from homology"/>